<organism>
    <name type="scientific">Mus musculus</name>
    <name type="common">Mouse</name>
    <dbReference type="NCBI Taxonomy" id="10090"/>
    <lineage>
        <taxon>Eukaryota</taxon>
        <taxon>Metazoa</taxon>
        <taxon>Chordata</taxon>
        <taxon>Craniata</taxon>
        <taxon>Vertebrata</taxon>
        <taxon>Euteleostomi</taxon>
        <taxon>Mammalia</taxon>
        <taxon>Eutheria</taxon>
        <taxon>Euarchontoglires</taxon>
        <taxon>Glires</taxon>
        <taxon>Rodentia</taxon>
        <taxon>Myomorpha</taxon>
        <taxon>Muroidea</taxon>
        <taxon>Muridae</taxon>
        <taxon>Murinae</taxon>
        <taxon>Mus</taxon>
        <taxon>Mus</taxon>
    </lineage>
</organism>
<protein>
    <recommendedName>
        <fullName>Pro-neuregulin-2, membrane-bound isoform</fullName>
        <shortName>Pro-NRG2</shortName>
    </recommendedName>
    <component>
        <recommendedName>
            <fullName>Neuregulin-2</fullName>
            <shortName>NRG-2</shortName>
        </recommendedName>
        <alternativeName>
            <fullName>Divergent of neuregulin 1</fullName>
            <shortName>DON-1</shortName>
        </alternativeName>
    </component>
</protein>
<keyword id="KW-0025">Alternative splicing</keyword>
<keyword id="KW-1003">Cell membrane</keyword>
<keyword id="KW-1015">Disulfide bond</keyword>
<keyword id="KW-0245">EGF-like domain</keyword>
<keyword id="KW-0325">Glycoprotein</keyword>
<keyword id="KW-0339">Growth factor</keyword>
<keyword id="KW-0393">Immunoglobulin domain</keyword>
<keyword id="KW-0472">Membrane</keyword>
<keyword id="KW-1185">Reference proteome</keyword>
<keyword id="KW-0964">Secreted</keyword>
<keyword id="KW-0812">Transmembrane</keyword>
<keyword id="KW-1133">Transmembrane helix</keyword>
<dbReference type="SMR" id="P56974"/>
<dbReference type="FunCoup" id="P56974">
    <property type="interactions" value="39"/>
</dbReference>
<dbReference type="STRING" id="10090.ENSMUSP00000111378"/>
<dbReference type="GlyConnect" id="2613">
    <property type="glycosylation" value="1 N-Linked glycan (1 site)"/>
</dbReference>
<dbReference type="GlyCosmos" id="P56974">
    <property type="glycosylation" value="4 sites, 1 glycan"/>
</dbReference>
<dbReference type="GlyGen" id="P56974">
    <property type="glycosylation" value="4 sites, 4 N-linked glycans (3 sites)"/>
</dbReference>
<dbReference type="iPTMnet" id="P56974"/>
<dbReference type="PhosphoSitePlus" id="P56974"/>
<dbReference type="PaxDb" id="10090-ENSMUSP00000111378"/>
<dbReference type="ProteomicsDB" id="252852">
    <molecule id="P56974-1"/>
</dbReference>
<dbReference type="ProteomicsDB" id="252853">
    <molecule id="P56974-2"/>
</dbReference>
<dbReference type="ProteomicsDB" id="252854">
    <molecule id="P56974-3"/>
</dbReference>
<dbReference type="ProteomicsDB" id="252855">
    <molecule id="P56974-4"/>
</dbReference>
<dbReference type="AGR" id="MGI:1098246"/>
<dbReference type="MGI" id="MGI:1098246">
    <property type="gene designation" value="Nrg2"/>
</dbReference>
<dbReference type="eggNOG" id="ENOG502QRNM">
    <property type="taxonomic scope" value="Eukaryota"/>
</dbReference>
<dbReference type="InParanoid" id="P56974"/>
<dbReference type="Reactome" id="R-MMU-1227986">
    <property type="pathway name" value="Signaling by ERBB2"/>
</dbReference>
<dbReference type="Reactome" id="R-MMU-1236394">
    <property type="pathway name" value="Signaling by ERBB4"/>
</dbReference>
<dbReference type="Reactome" id="R-MMU-1250196">
    <property type="pathway name" value="SHC1 events in ERBB2 signaling"/>
</dbReference>
<dbReference type="Reactome" id="R-MMU-1250342">
    <property type="pathway name" value="PI3K events in ERBB4 signaling"/>
</dbReference>
<dbReference type="Reactome" id="R-MMU-1250347">
    <property type="pathway name" value="SHC1 events in ERBB4 signaling"/>
</dbReference>
<dbReference type="Reactome" id="R-MMU-1257604">
    <property type="pathway name" value="PIP3 activates AKT signaling"/>
</dbReference>
<dbReference type="Reactome" id="R-MMU-1306955">
    <property type="pathway name" value="GRB7 events in ERBB2 signaling"/>
</dbReference>
<dbReference type="Reactome" id="R-MMU-1358803">
    <property type="pathway name" value="Downregulation of ERBB2:ERBB3 signaling"/>
</dbReference>
<dbReference type="Reactome" id="R-MMU-1963640">
    <property type="pathway name" value="GRB2 events in ERBB2 signaling"/>
</dbReference>
<dbReference type="Reactome" id="R-MMU-1963642">
    <property type="pathway name" value="PI3K events in ERBB2 signaling"/>
</dbReference>
<dbReference type="Reactome" id="R-MMU-5673001">
    <property type="pathway name" value="RAF/MAP kinase cascade"/>
</dbReference>
<dbReference type="Reactome" id="R-MMU-6785631">
    <property type="pathway name" value="ERBB2 Regulates Cell Motility"/>
</dbReference>
<dbReference type="Reactome" id="R-MMU-6811558">
    <property type="pathway name" value="PI5P, PP2A and IER3 Regulate PI3K/AKT Signaling"/>
</dbReference>
<dbReference type="Reactome" id="R-MMU-8847993">
    <property type="pathway name" value="ERBB2 Activates PTK6 Signaling"/>
</dbReference>
<dbReference type="Reactome" id="R-MMU-8863795">
    <property type="pathway name" value="Downregulation of ERBB2 signaling"/>
</dbReference>
<dbReference type="ChiTaRS" id="Nrg2">
    <property type="organism name" value="mouse"/>
</dbReference>
<dbReference type="PRO" id="PR:P56974"/>
<dbReference type="Proteomes" id="UP000000589">
    <property type="component" value="Unplaced"/>
</dbReference>
<dbReference type="RNAct" id="P56974">
    <property type="molecule type" value="protein"/>
</dbReference>
<dbReference type="GO" id="GO:0005576">
    <property type="term" value="C:extracellular region"/>
    <property type="evidence" value="ECO:0000304"/>
    <property type="project" value="Reactome"/>
</dbReference>
<dbReference type="GO" id="GO:0005615">
    <property type="term" value="C:extracellular space"/>
    <property type="evidence" value="ECO:0000314"/>
    <property type="project" value="MGI"/>
</dbReference>
<dbReference type="GO" id="GO:0005886">
    <property type="term" value="C:plasma membrane"/>
    <property type="evidence" value="ECO:0007669"/>
    <property type="project" value="UniProtKB-SubCell"/>
</dbReference>
<dbReference type="GO" id="GO:1990631">
    <property type="term" value="F:ErbB-4 class receptor binding"/>
    <property type="evidence" value="ECO:0000266"/>
    <property type="project" value="MGI"/>
</dbReference>
<dbReference type="GO" id="GO:0008083">
    <property type="term" value="F:growth factor activity"/>
    <property type="evidence" value="ECO:0007669"/>
    <property type="project" value="UniProtKB-KW"/>
</dbReference>
<dbReference type="GO" id="GO:0048018">
    <property type="term" value="F:receptor ligand activity"/>
    <property type="evidence" value="ECO:0000314"/>
    <property type="project" value="MGI"/>
</dbReference>
<dbReference type="GO" id="GO:0007166">
    <property type="term" value="P:cell surface receptor signaling pathway"/>
    <property type="evidence" value="ECO:0000314"/>
    <property type="project" value="MGI"/>
</dbReference>
<dbReference type="GO" id="GO:0038133">
    <property type="term" value="P:ERBB2-ERBB3 signaling pathway"/>
    <property type="evidence" value="ECO:0000314"/>
    <property type="project" value="MGI"/>
</dbReference>
<dbReference type="GO" id="GO:0038130">
    <property type="term" value="P:ERBB4 signaling pathway"/>
    <property type="evidence" value="ECO:0000314"/>
    <property type="project" value="MGI"/>
</dbReference>
<dbReference type="GO" id="GO:0038138">
    <property type="term" value="P:ERBB4-ERBB4 signaling pathway"/>
    <property type="evidence" value="ECO:0000314"/>
    <property type="project" value="MGI"/>
</dbReference>
<dbReference type="GO" id="GO:0007399">
    <property type="term" value="P:nervous system development"/>
    <property type="evidence" value="ECO:0007669"/>
    <property type="project" value="InterPro"/>
</dbReference>
<dbReference type="CDD" id="cd00054">
    <property type="entry name" value="EGF_CA"/>
    <property type="match status" value="1"/>
</dbReference>
<dbReference type="CDD" id="cd05750">
    <property type="entry name" value="Ig_Pro_neuregulin"/>
    <property type="match status" value="1"/>
</dbReference>
<dbReference type="FunFam" id="2.60.40.10:FF:000354">
    <property type="entry name" value="Pro-neuregulin-2, membrane-bound isoform"/>
    <property type="match status" value="1"/>
</dbReference>
<dbReference type="FunFam" id="2.10.25.10:FF:000116">
    <property type="entry name" value="pro-neuregulin-2, membrane-bound isoform"/>
    <property type="match status" value="1"/>
</dbReference>
<dbReference type="Gene3D" id="2.60.40.10">
    <property type="entry name" value="Immunoglobulins"/>
    <property type="match status" value="1"/>
</dbReference>
<dbReference type="Gene3D" id="2.10.25.10">
    <property type="entry name" value="Laminin"/>
    <property type="match status" value="1"/>
</dbReference>
<dbReference type="InterPro" id="IPR000742">
    <property type="entry name" value="EGF-like_dom"/>
</dbReference>
<dbReference type="InterPro" id="IPR007110">
    <property type="entry name" value="Ig-like_dom"/>
</dbReference>
<dbReference type="InterPro" id="IPR036179">
    <property type="entry name" value="Ig-like_dom_sf"/>
</dbReference>
<dbReference type="InterPro" id="IPR013783">
    <property type="entry name" value="Ig-like_fold"/>
</dbReference>
<dbReference type="InterPro" id="IPR013098">
    <property type="entry name" value="Ig_I-set"/>
</dbReference>
<dbReference type="InterPro" id="IPR003599">
    <property type="entry name" value="Ig_sub"/>
</dbReference>
<dbReference type="InterPro" id="IPR003598">
    <property type="entry name" value="Ig_sub2"/>
</dbReference>
<dbReference type="InterPro" id="IPR040180">
    <property type="entry name" value="Neuregulin"/>
</dbReference>
<dbReference type="InterPro" id="IPR002154">
    <property type="entry name" value="Neuregulin_C"/>
</dbReference>
<dbReference type="PANTHER" id="PTHR11100">
    <property type="entry name" value="HEREGULIN-NEUREGULIN FAMILY MEMBER"/>
    <property type="match status" value="1"/>
</dbReference>
<dbReference type="PANTHER" id="PTHR11100:SF20">
    <property type="entry name" value="PRO-NEUREGULIN-2, MEMBRANE-BOUND ISOFORM"/>
    <property type="match status" value="1"/>
</dbReference>
<dbReference type="Pfam" id="PF07679">
    <property type="entry name" value="I-set"/>
    <property type="match status" value="1"/>
</dbReference>
<dbReference type="Pfam" id="PF02158">
    <property type="entry name" value="Neuregulin"/>
    <property type="match status" value="1"/>
</dbReference>
<dbReference type="SMART" id="SM00409">
    <property type="entry name" value="IG"/>
    <property type="match status" value="1"/>
</dbReference>
<dbReference type="SMART" id="SM00408">
    <property type="entry name" value="IGc2"/>
    <property type="match status" value="1"/>
</dbReference>
<dbReference type="SUPFAM" id="SSF57196">
    <property type="entry name" value="EGF/Laminin"/>
    <property type="match status" value="1"/>
</dbReference>
<dbReference type="SUPFAM" id="SSF48726">
    <property type="entry name" value="Immunoglobulin"/>
    <property type="match status" value="1"/>
</dbReference>
<dbReference type="PROSITE" id="PS00022">
    <property type="entry name" value="EGF_1"/>
    <property type="match status" value="1"/>
</dbReference>
<dbReference type="PROSITE" id="PS01186">
    <property type="entry name" value="EGF_2"/>
    <property type="match status" value="1"/>
</dbReference>
<dbReference type="PROSITE" id="PS50026">
    <property type="entry name" value="EGF_3"/>
    <property type="match status" value="1"/>
</dbReference>
<dbReference type="PROSITE" id="PS50835">
    <property type="entry name" value="IG_LIKE"/>
    <property type="match status" value="1"/>
</dbReference>
<evidence type="ECO:0000250" key="1"/>
<evidence type="ECO:0000255" key="2"/>
<evidence type="ECO:0000255" key="3">
    <source>
        <dbReference type="PROSITE-ProRule" id="PRU00076"/>
    </source>
</evidence>
<evidence type="ECO:0000256" key="4">
    <source>
        <dbReference type="SAM" id="MobiDB-lite"/>
    </source>
</evidence>
<evidence type="ECO:0000269" key="5">
    <source>
    </source>
</evidence>
<evidence type="ECO:0000305" key="6"/>
<comment type="function">
    <text evidence="5">Direct ligand for ERBB3 and ERBB4 tyrosine kinase receptors. Concomitantly recruits ERBB1 and ERBB2 coreceptors, resulting in ligand-stimulated tyrosine phosphorylation and activation of the ERBB receptors. May also promote the heterodimerization with the EGF receptor.</text>
</comment>
<comment type="subunit">
    <text evidence="5">Interacts with ERBB3 and ERBB4.</text>
</comment>
<comment type="subcellular location">
    <molecule>Pro-neuregulin-2, membrane-bound isoform</molecule>
    <subcellularLocation>
        <location evidence="1">Cell membrane</location>
        <topology evidence="1">Single-pass type I membrane protein</topology>
    </subcellularLocation>
    <text evidence="1">Does not seem to be active.</text>
</comment>
<comment type="subcellular location">
    <molecule>Neuregulin-2</molecule>
    <subcellularLocation>
        <location evidence="1">Secreted</location>
    </subcellularLocation>
</comment>
<comment type="alternative products">
    <event type="alternative splicing"/>
    <isoform>
        <id>P56974-1</id>
        <name>NRG2-16A</name>
        <sequence type="displayed"/>
    </isoform>
    <isoform>
        <id>P56974-2</id>
        <name>DON-1M</name>
        <sequence type="described" ref="VSP_003464"/>
    </isoform>
    <isoform>
        <id>P56974-3</id>
        <name>DON-1S</name>
        <name>NRG2-5</name>
        <sequence type="described" ref="VSP_003462 VSP_003463"/>
    </isoform>
    <isoform>
        <id>P56974-4</id>
        <name>NRG2-10</name>
        <sequence type="described" ref="VSP_003460 VSP_003461"/>
    </isoform>
    <text>Additional isoforms seem to exist.</text>
</comment>
<comment type="tissue specificity">
    <text>Highest expression in the brain, with lower levels in the lung. In the cerebellum, found in granule and Purkinje cells.</text>
</comment>
<comment type="domain">
    <text evidence="1">The cytoplasmic domain may be involved in the regulation of trafficking and proteolytic processing. Regulation of the proteolytic processing involves initial intracellular domain dimerization (By similarity).</text>
</comment>
<comment type="domain">
    <text evidence="1">ERBB receptor binding is elicited entirely by the EGF-like domain.</text>
</comment>
<comment type="PTM">
    <text evidence="1">Proteolytic cleavage close to the plasma membrane on the external face leads to the release of the soluble growth factor form.</text>
</comment>
<comment type="PTM">
    <text evidence="1">Extensive glycosylation precedes the proteolytic cleavage.</text>
</comment>
<comment type="similarity">
    <text evidence="6">Belongs to the neuregulin family.</text>
</comment>
<sequence length="756" mass="82213">MRRDPAPGFSMLLFGVSLACYSPSLKSVQDQAYKAPVVVEGKVQGLAPAGGSSSNSTREPPASGRVALVKVLDKWPLRSGGLQREQVISVGSCAPLERNQRYIFFLEPTEQPLVFKTAFAPVDPNGKNIKKEVGKILCTDCATRPKLKKMKSQTGEVGEKQSLKCEAAAGNPQPSYRWFKDGKELNRSRDIRIKYGNGRKNSRLQFNKVRVEDAGEYVCEAENILGKDTVRGRLHVNSVSTTLSSWSGHARKCNETAKSYCVNGGVCYYIEGINQLSCKCPVGYTGDRCQQFAMVNFSKHLGFELKEAEELYQKRVLTITGICVALLVVGIVCVVAYCKTKKQRRQMHHHLRQNMCPAHQNRSLANGPSHPRLDPEEIQMADYISKNVPATDHVIRREAETTFSGSHSCSPSHHCSTATPTSSHRHESHTWSLERSESLTSDSQSGIMLSSVGTSKCNSPACVEARARRAAAYSQEERRRAAMPPYHDSIDSLRDSPHSERYVSALTTPARLSPVDFHYSLATQVPTFEITSPNSAHAVSLPPAAPISYRLAEQQPLLRHPAPPGPGPGSGPGADMQRSYDSYYYPAAGPGPRRSACALGGSLGSLPASPFRIPEDDEYETTQECAPPPPPRPRTRGASRRTSAGPRRWRRSRLNGLAAQRARAARDSLSLSSGSGCGSASASDDDADDADGALAAESTPFLGLRAAHDALRSDSPPLCPAADSRTYYSLDSHSTRASSRHSRGPPTRAKQDSGPL</sequence>
<feature type="propeptide" id="PRO_0000019475" evidence="1">
    <location>
        <begin position="1"/>
        <end position="19"/>
    </location>
</feature>
<feature type="chain" id="PRO_0000019476" description="Pro-neuregulin-2, membrane-bound isoform">
    <location>
        <begin position="20"/>
        <end position="756"/>
    </location>
</feature>
<feature type="chain" id="PRO_0000019477" description="Neuregulin-2">
    <location>
        <begin position="20"/>
        <end position="314"/>
    </location>
</feature>
<feature type="topological domain" description="Extracellular" evidence="2">
    <location>
        <begin position="20"/>
        <end position="315"/>
    </location>
</feature>
<feature type="transmembrane region" description="Helical; Note=Internal signal sequence" evidence="2">
    <location>
        <begin position="316"/>
        <end position="336"/>
    </location>
</feature>
<feature type="topological domain" description="Cytoplasmic" evidence="2">
    <location>
        <begin position="337"/>
        <end position="756"/>
    </location>
</feature>
<feature type="domain" description="Ig-like C2-type">
    <location>
        <begin position="145"/>
        <end position="240"/>
    </location>
</feature>
<feature type="domain" description="EGF-like" evidence="3">
    <location>
        <begin position="249"/>
        <end position="290"/>
    </location>
</feature>
<feature type="region of interest" description="Disordered" evidence="4">
    <location>
        <begin position="402"/>
        <end position="439"/>
    </location>
</feature>
<feature type="region of interest" description="Disordered" evidence="4">
    <location>
        <begin position="557"/>
        <end position="578"/>
    </location>
</feature>
<feature type="region of interest" description="Disordered" evidence="4">
    <location>
        <begin position="608"/>
        <end position="694"/>
    </location>
</feature>
<feature type="region of interest" description="Disordered" evidence="4">
    <location>
        <begin position="711"/>
        <end position="756"/>
    </location>
</feature>
<feature type="compositionally biased region" description="Low complexity" evidence="4">
    <location>
        <begin position="404"/>
        <end position="416"/>
    </location>
</feature>
<feature type="compositionally biased region" description="Basic and acidic residues" evidence="4">
    <location>
        <begin position="424"/>
        <end position="437"/>
    </location>
</feature>
<feature type="compositionally biased region" description="Low complexity" evidence="4">
    <location>
        <begin position="654"/>
        <end position="682"/>
    </location>
</feature>
<feature type="glycosylation site" description="N-linked (GlcNAc...) asparagine" evidence="2">
    <location>
        <position position="55"/>
    </location>
</feature>
<feature type="glycosylation site" description="N-linked (GlcNAc...) asparagine" evidence="2">
    <location>
        <position position="186"/>
    </location>
</feature>
<feature type="glycosylation site" description="N-linked (GlcNAc...) asparagine" evidence="2">
    <location>
        <position position="254"/>
    </location>
</feature>
<feature type="glycosylation site" description="N-linked (GlcNAc...) asparagine" evidence="2">
    <location>
        <position position="296"/>
    </location>
</feature>
<feature type="disulfide bond" evidence="1">
    <location>
        <begin position="165"/>
        <end position="219"/>
    </location>
</feature>
<feature type="disulfide bond" evidence="1">
    <location>
        <begin position="253"/>
        <end position="267"/>
    </location>
</feature>
<feature type="disulfide bond" evidence="1">
    <location>
        <begin position="261"/>
        <end position="278"/>
    </location>
</feature>
<feature type="disulfide bond" evidence="1">
    <location>
        <begin position="280"/>
        <end position="289"/>
    </location>
</feature>
<feature type="splice variant" id="VSP_003460" description="In isoform NRG2-10." evidence="6">
    <original>C</original>
    <variation>G</variation>
    <location>
        <position position="280"/>
    </location>
</feature>
<feature type="splice variant" id="VSP_003461" description="In isoform NRG2-10." evidence="6">
    <location>
        <begin position="281"/>
        <end position="756"/>
    </location>
</feature>
<feature type="splice variant" id="VSP_003462" description="In isoform DON-1S." evidence="6">
    <original>VGYTGDRCQQFAMVNFSKHLGFELKEAEELYQKRVLTITGICVALLVVG</original>
    <variation>NGFFGQRCLEKLPLRLYMPDPKQSVLWDTPGTGVSSSQWSTSPSTLDLN</variation>
    <location>
        <begin position="282"/>
        <end position="330"/>
    </location>
</feature>
<feature type="splice variant" id="VSP_003464" description="In isoform DON-1M." evidence="6">
    <original>VGYTGDRCQQFAMVNFSKHLGFELKE</original>
    <variation>NGFFGQRCLEKLPLRLYMPDPKQK</variation>
    <location>
        <begin position="282"/>
        <end position="307"/>
    </location>
</feature>
<feature type="splice variant" id="VSP_003463" description="In isoform DON-1S." evidence="6">
    <location>
        <begin position="331"/>
        <end position="756"/>
    </location>
</feature>
<accession>P56974</accession>
<reference key="1">
    <citation type="journal article" date="1997" name="Nature">
        <title>Neuregulin-2, a new ligand of ErbB3/ErbB4-receptor tyrosine kinases.</title>
        <authorList>
            <person name="Carraway K.L. III"/>
            <person name="Weber J.L."/>
            <person name="Unger M.J."/>
            <person name="Ledesma J."/>
            <person name="Yu N."/>
            <person name="Gassmann M."/>
            <person name="Lai C."/>
        </authorList>
    </citation>
    <scope>NUCLEOTIDE SEQUENCE (ISOFORMS DON-1S; NRG2-10 AND NRG2-16A)</scope>
    <scope>FUNCTION</scope>
    <scope>INTERACTION WITH ERBB3 AND ERBB4</scope>
    <source>
        <strain>C57BL/6J</strain>
        <tissue>Brain</tissue>
    </source>
</reference>
<reference key="2">
    <citation type="journal article" date="1997" name="Mol. Cell. Biol.">
        <title>Characterization of a neuregulin-related gene, Don-1, that is highly expressed in restricted regions of the cerebellum and hippocampus.</title>
        <authorList>
            <person name="Busfield S.J."/>
            <person name="Michnick D.A."/>
            <person name="Chickering T.W."/>
            <person name="Revett T.L."/>
            <person name="Ma J."/>
            <person name="Woolf E.A."/>
            <person name="Comrack C.A."/>
            <person name="Dussault B.J."/>
            <person name="Woolf J."/>
            <person name="Goodearl A.D.J."/>
            <person name="Gearing D.P."/>
        </authorList>
    </citation>
    <scope>NUCLEOTIDE SEQUENCE OF 150-756 (ISOFORMS DON-1M AND DON-1S)</scope>
    <source>
        <tissue>Choroid plexus</tissue>
    </source>
</reference>
<reference key="3">
    <citation type="journal article" date="2010" name="Cell">
        <title>A tissue-specific atlas of mouse protein phosphorylation and expression.</title>
        <authorList>
            <person name="Huttlin E.L."/>
            <person name="Jedrychowski M.P."/>
            <person name="Elias J.E."/>
            <person name="Goswami T."/>
            <person name="Rad R."/>
            <person name="Beausoleil S.A."/>
            <person name="Villen J."/>
            <person name="Haas W."/>
            <person name="Sowa M.E."/>
            <person name="Gygi S.P."/>
        </authorList>
    </citation>
    <scope>IDENTIFICATION BY MASS SPECTROMETRY [LARGE SCALE ANALYSIS]</scope>
    <source>
        <tissue>Brain</tissue>
    </source>
</reference>
<gene>
    <name type="primary">Nrg2</name>
</gene>
<proteinExistence type="evidence at protein level"/>
<name>NRG2_MOUSE</name>